<keyword id="KW-0975">Bacterial flagellum</keyword>
<keyword id="KW-1185">Reference proteome</keyword>
<keyword id="KW-0732">Signal</keyword>
<name>FLGI_WIGBR</name>
<accession>Q8D3F6</accession>
<feature type="signal peptide" evidence="1">
    <location>
        <begin position="1"/>
        <end position="21"/>
    </location>
</feature>
<feature type="chain" id="PRO_0000009530" description="Flagellar P-ring protein">
    <location>
        <begin position="22"/>
        <end position="370"/>
    </location>
</feature>
<protein>
    <recommendedName>
        <fullName evidence="1">Flagellar P-ring protein</fullName>
    </recommendedName>
    <alternativeName>
        <fullName evidence="1">Basal body P-ring protein</fullName>
    </alternativeName>
</protein>
<reference key="1">
    <citation type="journal article" date="2002" name="Nat. Genet.">
        <title>Genome sequence of the endocellular obligate symbiont of tsetse flies, Wigglesworthia glossinidia.</title>
        <authorList>
            <person name="Akman L."/>
            <person name="Yamashita A."/>
            <person name="Watanabe H."/>
            <person name="Oshima K."/>
            <person name="Shiba T."/>
            <person name="Hattori M."/>
            <person name="Aksoy S."/>
        </authorList>
    </citation>
    <scope>NUCLEOTIDE SEQUENCE [LARGE SCALE GENOMIC DNA]</scope>
</reference>
<sequence length="370" mass="39548">MKYILIKLSIVMIFIINSASKAERIRDLTTIVGVRDNVLIGYGLVVGLDGTGDQTTQTPFTIQSLRNMLSQLGVSIPSGINMQLKNIAAVMVTAKLPPFVKIGQKIDVMVSSLGSAKSLRGGTLLITPLKGVDNQIYALAQGNILVSGFGAQSGGNTSQVNQLNGGRISEGAIIEKSIKTDFDKREIITLQLNNNDFSLAQQISDAINTYFGKKSAYPTDSRTINVILSASYDKSEKVKFIARLQNIPIIIGPSDAIIVINSRTGSVVINKEVMLNSCAVAHGELTVEIKKRTKVNQPNTILGGGSTVVTPETEILIKNQGDSLQEISSSTNLNEVISSLNSIGAKPNDLMAILESMKSAGCLNAKLEIN</sequence>
<comment type="function">
    <text evidence="1">Assembles around the rod to form the L-ring and probably protects the motor/basal body from shearing forces during rotation.</text>
</comment>
<comment type="subunit">
    <text evidence="1">The basal body constitutes a major portion of the flagellar organelle and consists of four rings (L,P,S, and M) mounted on a central rod.</text>
</comment>
<comment type="subcellular location">
    <subcellularLocation>
        <location evidence="1">Bacterial flagellum basal body</location>
    </subcellularLocation>
</comment>
<comment type="similarity">
    <text evidence="1">Belongs to the FlgI family.</text>
</comment>
<gene>
    <name evidence="1" type="primary">flgI</name>
    <name type="ordered locus">WIGBR0450</name>
</gene>
<dbReference type="EMBL" id="BA000021">
    <property type="protein sequence ID" value="BAC24191.1"/>
    <property type="molecule type" value="Genomic_DNA"/>
</dbReference>
<dbReference type="SMR" id="Q8D3F6"/>
<dbReference type="STRING" id="36870.gene:10368523"/>
<dbReference type="KEGG" id="wbr:flgI"/>
<dbReference type="eggNOG" id="COG1706">
    <property type="taxonomic scope" value="Bacteria"/>
</dbReference>
<dbReference type="HOGENOM" id="CLU_045235_1_0_6"/>
<dbReference type="OrthoDB" id="9786431at2"/>
<dbReference type="Proteomes" id="UP000000562">
    <property type="component" value="Chromosome"/>
</dbReference>
<dbReference type="GO" id="GO:0009428">
    <property type="term" value="C:bacterial-type flagellum basal body, distal rod, P ring"/>
    <property type="evidence" value="ECO:0007669"/>
    <property type="project" value="InterPro"/>
</dbReference>
<dbReference type="GO" id="GO:0030288">
    <property type="term" value="C:outer membrane-bounded periplasmic space"/>
    <property type="evidence" value="ECO:0007669"/>
    <property type="project" value="InterPro"/>
</dbReference>
<dbReference type="GO" id="GO:0005198">
    <property type="term" value="F:structural molecule activity"/>
    <property type="evidence" value="ECO:0007669"/>
    <property type="project" value="InterPro"/>
</dbReference>
<dbReference type="GO" id="GO:0071973">
    <property type="term" value="P:bacterial-type flagellum-dependent cell motility"/>
    <property type="evidence" value="ECO:0007669"/>
    <property type="project" value="InterPro"/>
</dbReference>
<dbReference type="HAMAP" id="MF_00416">
    <property type="entry name" value="FlgI"/>
    <property type="match status" value="1"/>
</dbReference>
<dbReference type="InterPro" id="IPR001782">
    <property type="entry name" value="Flag_FlgI"/>
</dbReference>
<dbReference type="NCBIfam" id="NF003676">
    <property type="entry name" value="PRK05303.1"/>
    <property type="match status" value="1"/>
</dbReference>
<dbReference type="PANTHER" id="PTHR30381">
    <property type="entry name" value="FLAGELLAR P-RING PERIPLASMIC PROTEIN FLGI"/>
    <property type="match status" value="1"/>
</dbReference>
<dbReference type="PANTHER" id="PTHR30381:SF0">
    <property type="entry name" value="FLAGELLAR P-RING PROTEIN"/>
    <property type="match status" value="1"/>
</dbReference>
<dbReference type="Pfam" id="PF02119">
    <property type="entry name" value="FlgI"/>
    <property type="match status" value="1"/>
</dbReference>
<dbReference type="PRINTS" id="PR01010">
    <property type="entry name" value="FLGPRINGFLGI"/>
</dbReference>
<evidence type="ECO:0000255" key="1">
    <source>
        <dbReference type="HAMAP-Rule" id="MF_00416"/>
    </source>
</evidence>
<organism>
    <name type="scientific">Wigglesworthia glossinidia brevipalpis</name>
    <dbReference type="NCBI Taxonomy" id="36870"/>
    <lineage>
        <taxon>Bacteria</taxon>
        <taxon>Pseudomonadati</taxon>
        <taxon>Pseudomonadota</taxon>
        <taxon>Gammaproteobacteria</taxon>
        <taxon>Enterobacterales</taxon>
        <taxon>Erwiniaceae</taxon>
        <taxon>Wigglesworthia</taxon>
    </lineage>
</organism>
<proteinExistence type="inferred from homology"/>